<accession>Q7ZWV3</accession>
<feature type="chain" id="PRO_0000232426" description="Protein NDRG1-B">
    <location>
        <begin position="1"/>
        <end position="396"/>
    </location>
</feature>
<feature type="repeat" description="1" evidence="2">
    <location>
        <begin position="340"/>
        <end position="349"/>
    </location>
</feature>
<feature type="repeat" description="2" evidence="2">
    <location>
        <begin position="350"/>
        <end position="359"/>
    </location>
</feature>
<feature type="repeat" description="3" evidence="2">
    <location>
        <begin position="360"/>
        <end position="369"/>
    </location>
</feature>
<feature type="repeat" description="4" evidence="2">
    <location>
        <begin position="370"/>
        <end position="379"/>
    </location>
</feature>
<feature type="region of interest" description="Disordered" evidence="3">
    <location>
        <begin position="326"/>
        <end position="396"/>
    </location>
</feature>
<feature type="region of interest" description="4 X 10 AA tandem repeats of G-[NS]-R-S-R-[AS]-[HQ]-T-[DGN]-[DET]" evidence="2">
    <location>
        <begin position="340"/>
        <end position="379"/>
    </location>
</feature>
<feature type="compositionally biased region" description="Low complexity" evidence="3">
    <location>
        <begin position="327"/>
        <end position="340"/>
    </location>
</feature>
<feature type="compositionally biased region" description="Basic and acidic residues" evidence="3">
    <location>
        <begin position="366"/>
        <end position="377"/>
    </location>
</feature>
<feature type="compositionally biased region" description="Polar residues" evidence="3">
    <location>
        <begin position="378"/>
        <end position="390"/>
    </location>
</feature>
<protein>
    <recommendedName>
        <fullName>Protein NDRG1-B</fullName>
        <shortName>xNDRG1-B</shortName>
    </recommendedName>
</protein>
<comment type="function">
    <text evidence="1">May be involved in pronephros development, after specification of the pronephros.</text>
</comment>
<comment type="similarity">
    <text evidence="2">Belongs to the NDRG family.</text>
</comment>
<gene>
    <name type="primary">ndrg1-b</name>
</gene>
<reference evidence="4" key="1">
    <citation type="submission" date="2003-02" db="EMBL/GenBank/DDBJ databases">
        <authorList>
            <consortium name="NIH - Xenopus Gene Collection (XGC) project"/>
        </authorList>
    </citation>
    <scope>NUCLEOTIDE SEQUENCE [LARGE SCALE MRNA]</scope>
    <source>
        <tissue evidence="4">Embryo</tissue>
    </source>
</reference>
<dbReference type="EMBL" id="BC046693">
    <property type="protein sequence ID" value="AAH46693.1"/>
    <property type="molecule type" value="mRNA"/>
</dbReference>
<dbReference type="SMR" id="Q7ZWV3"/>
<dbReference type="ESTHER" id="xenla-ndr1b">
    <property type="family name" value="Ndr_family"/>
</dbReference>
<dbReference type="MEROPS" id="S33.988"/>
<dbReference type="DNASU" id="380319"/>
<dbReference type="GeneID" id="380319"/>
<dbReference type="KEGG" id="xla:380319"/>
<dbReference type="AGR" id="Xenbase:XB-GENE-993278"/>
<dbReference type="CTD" id="380319"/>
<dbReference type="Xenbase" id="XB-GENE-993278">
    <property type="gene designation" value="ndrg1.S"/>
</dbReference>
<dbReference type="OMA" id="NINCCAE"/>
<dbReference type="OrthoDB" id="741027at2759"/>
<dbReference type="Proteomes" id="UP000186698">
    <property type="component" value="Chromosome 6S"/>
</dbReference>
<dbReference type="Bgee" id="380319">
    <property type="expression patterns" value="Expressed in camera-type eye and 13 other cell types or tissues"/>
</dbReference>
<dbReference type="GO" id="GO:0005737">
    <property type="term" value="C:cytoplasm"/>
    <property type="evidence" value="ECO:0000318"/>
    <property type="project" value="GO_Central"/>
</dbReference>
<dbReference type="GO" id="GO:0048793">
    <property type="term" value="P:pronephros development"/>
    <property type="evidence" value="ECO:0000250"/>
    <property type="project" value="UniProtKB"/>
</dbReference>
<dbReference type="GO" id="GO:0007165">
    <property type="term" value="P:signal transduction"/>
    <property type="evidence" value="ECO:0000318"/>
    <property type="project" value="GO_Central"/>
</dbReference>
<dbReference type="FunFam" id="3.40.50.1820:FF:000006">
    <property type="entry name" value="NDRG family member 3"/>
    <property type="match status" value="1"/>
</dbReference>
<dbReference type="Gene3D" id="3.40.50.1820">
    <property type="entry name" value="alpha/beta hydrolase"/>
    <property type="match status" value="1"/>
</dbReference>
<dbReference type="InterPro" id="IPR029058">
    <property type="entry name" value="AB_hydrolase_fold"/>
</dbReference>
<dbReference type="InterPro" id="IPR004142">
    <property type="entry name" value="NDRG"/>
</dbReference>
<dbReference type="PANTHER" id="PTHR11034">
    <property type="entry name" value="N-MYC DOWNSTREAM REGULATED"/>
    <property type="match status" value="1"/>
</dbReference>
<dbReference type="Pfam" id="PF03096">
    <property type="entry name" value="Ndr"/>
    <property type="match status" value="1"/>
</dbReference>
<dbReference type="SUPFAM" id="SSF53474">
    <property type="entry name" value="alpha/beta-Hydrolases"/>
    <property type="match status" value="1"/>
</dbReference>
<keyword id="KW-0217">Developmental protein</keyword>
<keyword id="KW-1185">Reference proteome</keyword>
<keyword id="KW-0677">Repeat</keyword>
<name>NDR1B_XENLA</name>
<proteinExistence type="evidence at transcript level"/>
<evidence type="ECO:0000250" key="1">
    <source>
        <dbReference type="UniProtKB" id="Q641F2"/>
    </source>
</evidence>
<evidence type="ECO:0000255" key="2"/>
<evidence type="ECO:0000256" key="3">
    <source>
        <dbReference type="SAM" id="MobiDB-lite"/>
    </source>
</evidence>
<evidence type="ECO:0000312" key="4">
    <source>
        <dbReference type="EMBL" id="AAH46693.1"/>
    </source>
</evidence>
<sequence length="396" mass="43505">MSAEMTDLNFAEGRPLMGEKEDDITVLLQEYVTQEHDIETAHGIVHVTMCGTPKLNRPVILTYHDIGLNHKTCFNSLFNFEDMHEITQHFSVCHVDAPGQQEGAASFPAGYMYPSMDQLAEMLPGVVQQLGLKSIIGLGIGSGAYILTRFALNHPSMVEGLVLININPCAEGWMDWAATKISGWAHALPEMVISHLFSKDEVHSNPELVETYRQHILHDINQNNLQLFVKSYNSRRDLEIERPIPGSNTVTLKCPSLLVVGDSSPAVDAVVECNSKLDPTKTTLLKMSDCGGFPQVVQPAKLAEAFKYFVQGMGYMPAASMTRLMRSRTGSAASSSSQDGNRSRSHTNEGSRSRSQTGDGNRSRAHTGDGNRSRSHTDTNNVNSDHNTPKSMEVSC</sequence>
<organism>
    <name type="scientific">Xenopus laevis</name>
    <name type="common">African clawed frog</name>
    <dbReference type="NCBI Taxonomy" id="8355"/>
    <lineage>
        <taxon>Eukaryota</taxon>
        <taxon>Metazoa</taxon>
        <taxon>Chordata</taxon>
        <taxon>Craniata</taxon>
        <taxon>Vertebrata</taxon>
        <taxon>Euteleostomi</taxon>
        <taxon>Amphibia</taxon>
        <taxon>Batrachia</taxon>
        <taxon>Anura</taxon>
        <taxon>Pipoidea</taxon>
        <taxon>Pipidae</taxon>
        <taxon>Xenopodinae</taxon>
        <taxon>Xenopus</taxon>
        <taxon>Xenopus</taxon>
    </lineage>
</organism>